<evidence type="ECO:0000250" key="1">
    <source>
        <dbReference type="UniProtKB" id="O15431"/>
    </source>
</evidence>
<evidence type="ECO:0000250" key="2">
    <source>
        <dbReference type="UniProtKB" id="Q8K211"/>
    </source>
</evidence>
<evidence type="ECO:0000250" key="3">
    <source>
        <dbReference type="UniProtKB" id="Q9JK41"/>
    </source>
</evidence>
<evidence type="ECO:0000255" key="4"/>
<evidence type="ECO:0000256" key="5">
    <source>
        <dbReference type="SAM" id="MobiDB-lite"/>
    </source>
</evidence>
<evidence type="ECO:0000269" key="6">
    <source>
    </source>
</evidence>
<evidence type="ECO:0000303" key="7">
    <source>
    </source>
</evidence>
<evidence type="ECO:0000305" key="8"/>
<comment type="function">
    <molecule>High affinity copper uptake protein 1</molecule>
    <text evidence="1 2 3">Uniporter that mediates the transport of copper(1+) from the extracellular space to the cytoplasm, across the plasma membrane and delivers directly copper(1+) to specific chaperone such as ATOX1, via a copper(1+)- mediated transient interaction between the C-terminal domain and a copper(1+) chaperone, thus controlling intracellular copper(1+) levels (By similarity). May function in copper(1+) import from the apical membrane thus may drive intestinal copper absorption (By similarity). The copper(1+) transport mechanism is sodium-independent, saturable and of high-affinity. Also mediates the uptake of silver(1+). May function in the influx of the platinum-containing chemotherapeutic agents (By similarity). The platinum-containing chemotherapeutic agents uptake is saturable (By similarity). In vitro, mediates the transport of cadmium(2+) into cells. Also participates in the first step of copper(2+) acquisition by cells through a direct transfer of copper(2+) from copper(2+) carriers in blood, such as ALB to the N-terminal domain of SLC31A1, leading to copper(2+) reduction and probably followed by copper(1+) stabilization. In addition, functions as a redox sensor to promote angiogenesis in endothelial cells, in a copper(1+) transport independent manner, by transmitting the VEGF-induced ROS signal through a sulfenylation at Cys-189 leadin g to a subsequent disulfide bond formation between SLC31A1 and KDR. The SLC31A1-KDR complex is then co-internalized to early endosomes, driving a sustained VEGFR2 signaling (By similarity).</text>
</comment>
<comment type="function">
    <molecule>Truncated CTR1 form</molecule>
    <text evidence="2">Mobilizes copper(1+) out of the endosomal compartment, making copper(1+) available for export out of the cells.</text>
</comment>
<comment type="catalytic activity">
    <reaction evidence="1">
        <text>Ag(+)(out) = Ag(+)(in)</text>
        <dbReference type="Rhea" id="RHEA:75207"/>
        <dbReference type="ChEBI" id="CHEBI:49468"/>
    </reaction>
</comment>
<comment type="catalytic activity">
    <reaction evidence="1">
        <text>Cu(+)(out) = Cu(+)(in)</text>
        <dbReference type="Rhea" id="RHEA:75211"/>
        <dbReference type="ChEBI" id="CHEBI:49552"/>
    </reaction>
</comment>
<comment type="subunit">
    <text evidence="1">Homotrimer; is stabilized by cisplatin via interactions between cisplatin and the methionine-rich clusters, and could be crucial for the copper(2+) reduction process and copper(1+) stabilization. Heterotrimer between SLC31A1, CCS and SOD1; this heterotrimer is copper(1+)-mediated and its maintenance is regulated through SOD1 activation. Interacts with KDR; this interaction is induced upon VEGFA stimulation leading to SLC31A1 and KDR subsequent co-internalization to early endosomes, thereby activating KDR downstream signaling in endothelial cells. Interacts (via C-terminal domain) with ATOX1 (via dimer form); this interaction improves ATOX1 stability and controls intracellular copper(1+) levels. Interacts with SLC31A2; this interaction stabilizes SLC31A2 and protects its from ubiquitination and degradation. Interacts (via C-terminal domain) with CCS; this interaction is copper(1+)-mediated.</text>
</comment>
<comment type="subcellular location">
    <subcellularLocation>
        <location evidence="1">Cell membrane</location>
        <topology evidence="4">Multi-pass membrane protein</topology>
    </subcellularLocation>
    <subcellularLocation>
        <location evidence="1">Early endosome membrane</location>
        <topology evidence="4">Multi-pass membrane protein</topology>
    </subcellularLocation>
    <subcellularLocation>
        <location evidence="1">Recycling endosome membrane</location>
        <topology evidence="4">Multi-pass membrane protein</topology>
    </subcellularLocation>
    <subcellularLocation>
        <location evidence="6">Apical cell membrane</location>
        <topology evidence="4">Multi-pass membrane protein</topology>
    </subcellularLocation>
    <subcellularLocation>
        <location evidence="2">Late endosome membrane</location>
        <topology evidence="4">Multi-pass membrane protein</topology>
    </subcellularLocation>
    <subcellularLocation>
        <location evidence="2">Basolateral cell membrane</location>
        <topology evidence="4">Multi-pass membrane protein</topology>
    </subcellularLocation>
    <text evidence="1 2 3 6">The localization is controlled by the intra and extra-cellular copper concentration. Under conditions of elevated extracellular copper concentrations, it is rapidly internalized by endocytosis from the plasma membrane by a clathrin- and dynamin-mediated process and degradated in order to prevent intracellular copper accumulation and to reduce the transport of the copper across the membrane. The internalized SLC31A1 is then localized in early endosomes, and, upon a low extracellular copper concentrations, it is transported back to the plasma membrane in a RAB11A-dependent recycling pathway (By similarity). Localizes to the apical membrane in intestinal epithelial cells (PubMed:20699218). Localizes to the neuronal cell body plasma membranes (By similarity). Mainly localized on the basolateral side of renal tubular cells (By similarity).</text>
</comment>
<comment type="domain">
    <text evidence="1">The C-terminal domain mediates copper(1+) binding and is involved in the copper(1+)-dependent-ATOX1 interaction. The C-terminal domain appears to act to limit transport through the pore by regulating the rate of exit of copper ions at the intracellular side. The N-terminal domain can collect copper(2+) from copper(2+) carriers in blood. The N-terminal domain, in the trimeric arrangement, tunes its reactivity with copper, promoting copper(2+) reduction and copper(1+) stabilization. The Mets motif is involved in copper(1+) binding.</text>
</comment>
<comment type="PTM">
    <text evidence="1">Proteolytic cleavage, leading to a truncated form, is facilitated by SLC31A2 and initiated preferentially by CTSL and to a minor extend by CTSB in endolysosomal compartments. A post-CTSL/cathepsin L processing occurs to yield to the fully truncated form.</text>
</comment>
<comment type="PTM">
    <text evidence="1">Sulfenylated at Cys-188 after stimulation with VEGFA, which induces SLC31A1-KDR disulfide bond formation and their co-internalization to early endosomes, driving to a sustained VEGFR2 signaling.</text>
</comment>
<comment type="similarity">
    <text evidence="8">Belongs to the copper transporter (Ctr) (TC 1.A.56) family. SLC31A subfamily.</text>
</comment>
<keyword id="KW-1003">Cell membrane</keyword>
<keyword id="KW-0186">Copper</keyword>
<keyword id="KW-0187">Copper transport</keyword>
<keyword id="KW-1015">Disulfide bond</keyword>
<keyword id="KW-0967">Endosome</keyword>
<keyword id="KW-0406">Ion transport</keyword>
<keyword id="KW-0472">Membrane</keyword>
<keyword id="KW-0558">Oxidation</keyword>
<keyword id="KW-0597">Phosphoprotein</keyword>
<keyword id="KW-1185">Reference proteome</keyword>
<keyword id="KW-0812">Transmembrane</keyword>
<keyword id="KW-1133">Transmembrane helix</keyword>
<keyword id="KW-0813">Transport</keyword>
<accession>Q8WNR0</accession>
<organism>
    <name type="scientific">Sus scrofa</name>
    <name type="common">Pig</name>
    <dbReference type="NCBI Taxonomy" id="9823"/>
    <lineage>
        <taxon>Eukaryota</taxon>
        <taxon>Metazoa</taxon>
        <taxon>Chordata</taxon>
        <taxon>Craniata</taxon>
        <taxon>Vertebrata</taxon>
        <taxon>Euteleostomi</taxon>
        <taxon>Mammalia</taxon>
        <taxon>Eutheria</taxon>
        <taxon>Laurasiatheria</taxon>
        <taxon>Artiodactyla</taxon>
        <taxon>Suina</taxon>
        <taxon>Suidae</taxon>
        <taxon>Sus</taxon>
    </lineage>
</organism>
<dbReference type="EMBL" id="AF320815">
    <property type="protein sequence ID" value="AAL49494.1"/>
    <property type="molecule type" value="mRNA"/>
</dbReference>
<dbReference type="EMBL" id="AY141204">
    <property type="protein sequence ID" value="AAN46363.1"/>
    <property type="molecule type" value="Genomic_DNA"/>
</dbReference>
<dbReference type="EMBL" id="AY141203">
    <property type="protein sequence ID" value="AAN46363.1"/>
    <property type="status" value="JOINED"/>
    <property type="molecule type" value="Genomic_DNA"/>
</dbReference>
<dbReference type="RefSeq" id="NP_999265.1">
    <property type="nucleotide sequence ID" value="NM_214100.3"/>
</dbReference>
<dbReference type="BMRB" id="Q8WNR0"/>
<dbReference type="SMR" id="Q8WNR0"/>
<dbReference type="FunCoup" id="Q8WNR0">
    <property type="interactions" value="1099"/>
</dbReference>
<dbReference type="STRING" id="9823.ENSSSCP00000044266"/>
<dbReference type="PaxDb" id="9823-ENSSSCP00000023413"/>
<dbReference type="PeptideAtlas" id="Q8WNR0"/>
<dbReference type="Ensembl" id="ENSSSCT00000043438.3">
    <property type="protein sequence ID" value="ENSSSCP00000044266.2"/>
    <property type="gene ID" value="ENSSSCG00000034278.3"/>
</dbReference>
<dbReference type="Ensembl" id="ENSSSCT00015025923.1">
    <property type="protein sequence ID" value="ENSSSCP00015010140.1"/>
    <property type="gene ID" value="ENSSSCG00015019589.1"/>
</dbReference>
<dbReference type="Ensembl" id="ENSSSCT00025056789.1">
    <property type="protein sequence ID" value="ENSSSCP00025024011.1"/>
    <property type="gene ID" value="ENSSSCG00025041899.1"/>
</dbReference>
<dbReference type="Ensembl" id="ENSSSCT00035102104.1">
    <property type="protein sequence ID" value="ENSSSCP00035043524.1"/>
    <property type="gene ID" value="ENSSSCG00035075133.1"/>
</dbReference>
<dbReference type="Ensembl" id="ENSSSCT00040015505.1">
    <property type="protein sequence ID" value="ENSSSCP00040006097.1"/>
    <property type="gene ID" value="ENSSSCG00040011811.1"/>
</dbReference>
<dbReference type="Ensembl" id="ENSSSCT00045050616.1">
    <property type="protein sequence ID" value="ENSSSCP00045035237.1"/>
    <property type="gene ID" value="ENSSSCG00045029659.1"/>
</dbReference>
<dbReference type="Ensembl" id="ENSSSCT00050073856.1">
    <property type="protein sequence ID" value="ENSSSCP00050031823.1"/>
    <property type="gene ID" value="ENSSSCG00050054168.1"/>
</dbReference>
<dbReference type="Ensembl" id="ENSSSCT00065023777.1">
    <property type="protein sequence ID" value="ENSSSCP00065009678.1"/>
    <property type="gene ID" value="ENSSSCG00065017903.1"/>
</dbReference>
<dbReference type="Ensembl" id="ENSSSCT00070042714.1">
    <property type="protein sequence ID" value="ENSSSCP00070035928.1"/>
    <property type="gene ID" value="ENSSSCG00070021475.1"/>
</dbReference>
<dbReference type="Ensembl" id="ENSSSCT00070042716.1">
    <property type="protein sequence ID" value="ENSSSCP00070035930.1"/>
    <property type="gene ID" value="ENSSSCG00070021475.1"/>
</dbReference>
<dbReference type="Ensembl" id="ENSSSCT00115024611">
    <property type="protein sequence ID" value="ENSSSCP00115023336"/>
    <property type="gene ID" value="ENSSSCG00115014178"/>
</dbReference>
<dbReference type="GeneID" id="397186"/>
<dbReference type="KEGG" id="ssc:397186"/>
<dbReference type="CTD" id="1317"/>
<dbReference type="VGNC" id="VGNC:103180">
    <property type="gene designation" value="SLC31A1"/>
</dbReference>
<dbReference type="eggNOG" id="KOG3386">
    <property type="taxonomic scope" value="Eukaryota"/>
</dbReference>
<dbReference type="GeneTree" id="ENSGT00940000155147"/>
<dbReference type="InParanoid" id="Q8WNR0"/>
<dbReference type="OrthoDB" id="161814at2759"/>
<dbReference type="Reactome" id="R-SSC-425410">
    <property type="pathway name" value="Metal ion SLC transporters"/>
</dbReference>
<dbReference type="Proteomes" id="UP000008227">
    <property type="component" value="Chromosome 1"/>
</dbReference>
<dbReference type="Proteomes" id="UP000314985">
    <property type="component" value="Chromosome 1"/>
</dbReference>
<dbReference type="Proteomes" id="UP000694570">
    <property type="component" value="Unplaced"/>
</dbReference>
<dbReference type="Proteomes" id="UP000694571">
    <property type="component" value="Unplaced"/>
</dbReference>
<dbReference type="Proteomes" id="UP000694720">
    <property type="component" value="Unplaced"/>
</dbReference>
<dbReference type="Proteomes" id="UP000694722">
    <property type="component" value="Unplaced"/>
</dbReference>
<dbReference type="Proteomes" id="UP000694723">
    <property type="component" value="Unplaced"/>
</dbReference>
<dbReference type="Proteomes" id="UP000694724">
    <property type="component" value="Unplaced"/>
</dbReference>
<dbReference type="Proteomes" id="UP000694725">
    <property type="component" value="Unplaced"/>
</dbReference>
<dbReference type="Proteomes" id="UP000694726">
    <property type="component" value="Unplaced"/>
</dbReference>
<dbReference type="Proteomes" id="UP000694727">
    <property type="component" value="Unplaced"/>
</dbReference>
<dbReference type="Proteomes" id="UP000694728">
    <property type="component" value="Unplaced"/>
</dbReference>
<dbReference type="Bgee" id="ENSSSCG00000034278">
    <property type="expression patterns" value="Expressed in duodenum and 45 other cell types or tissues"/>
</dbReference>
<dbReference type="GO" id="GO:0016324">
    <property type="term" value="C:apical plasma membrane"/>
    <property type="evidence" value="ECO:0000314"/>
    <property type="project" value="UniProtKB"/>
</dbReference>
<dbReference type="GO" id="GO:0016323">
    <property type="term" value="C:basolateral plasma membrane"/>
    <property type="evidence" value="ECO:0000250"/>
    <property type="project" value="UniProtKB"/>
</dbReference>
<dbReference type="GO" id="GO:0031901">
    <property type="term" value="C:early endosome membrane"/>
    <property type="evidence" value="ECO:0000250"/>
    <property type="project" value="UniProtKB"/>
</dbReference>
<dbReference type="GO" id="GO:0014704">
    <property type="term" value="C:intercalated disc"/>
    <property type="evidence" value="ECO:0007669"/>
    <property type="project" value="Ensembl"/>
</dbReference>
<dbReference type="GO" id="GO:0031902">
    <property type="term" value="C:late endosome membrane"/>
    <property type="evidence" value="ECO:0007669"/>
    <property type="project" value="UniProtKB-SubCell"/>
</dbReference>
<dbReference type="GO" id="GO:0005886">
    <property type="term" value="C:plasma membrane"/>
    <property type="evidence" value="ECO:0000250"/>
    <property type="project" value="UniProtKB"/>
</dbReference>
<dbReference type="GO" id="GO:0055038">
    <property type="term" value="C:recycling endosome membrane"/>
    <property type="evidence" value="ECO:0000250"/>
    <property type="project" value="UniProtKB"/>
</dbReference>
<dbReference type="GO" id="GO:0005507">
    <property type="term" value="F:copper ion binding"/>
    <property type="evidence" value="ECO:0000250"/>
    <property type="project" value="UniProtKB"/>
</dbReference>
<dbReference type="GO" id="GO:0005375">
    <property type="term" value="F:copper ion transmembrane transporter activity"/>
    <property type="evidence" value="ECO:0000250"/>
    <property type="project" value="UniProtKB"/>
</dbReference>
<dbReference type="GO" id="GO:0042802">
    <property type="term" value="F:identical protein binding"/>
    <property type="evidence" value="ECO:0007669"/>
    <property type="project" value="Ensembl"/>
</dbReference>
<dbReference type="GO" id="GO:0015080">
    <property type="term" value="F:silver ion transmembrane transporter activity"/>
    <property type="evidence" value="ECO:0000250"/>
    <property type="project" value="UniProtKB"/>
</dbReference>
<dbReference type="GO" id="GO:0042910">
    <property type="term" value="F:xenobiotic transmembrane transporter activity"/>
    <property type="evidence" value="ECO:0000250"/>
    <property type="project" value="UniProtKB"/>
</dbReference>
<dbReference type="GO" id="GO:0001525">
    <property type="term" value="P:angiogenesis"/>
    <property type="evidence" value="ECO:0000250"/>
    <property type="project" value="UniProtKB"/>
</dbReference>
<dbReference type="GO" id="GO:0015677">
    <property type="term" value="P:copper ion import"/>
    <property type="evidence" value="ECO:0000250"/>
    <property type="project" value="UniProtKB"/>
</dbReference>
<dbReference type="GO" id="GO:0006825">
    <property type="term" value="P:copper ion transport"/>
    <property type="evidence" value="ECO:0000250"/>
    <property type="project" value="UniProtKB"/>
</dbReference>
<dbReference type="GO" id="GO:0051649">
    <property type="term" value="P:establishment of localization in cell"/>
    <property type="evidence" value="ECO:0007669"/>
    <property type="project" value="Ensembl"/>
</dbReference>
<dbReference type="GO" id="GO:0006878">
    <property type="term" value="P:intracellular copper ion homeostasis"/>
    <property type="evidence" value="ECO:0007669"/>
    <property type="project" value="Ensembl"/>
</dbReference>
<dbReference type="GO" id="GO:0015679">
    <property type="term" value="P:plasma membrane copper ion transport"/>
    <property type="evidence" value="ECO:0000250"/>
    <property type="project" value="UniProtKB"/>
</dbReference>
<dbReference type="GO" id="GO:0051259">
    <property type="term" value="P:protein complex oligomerization"/>
    <property type="evidence" value="ECO:0000250"/>
    <property type="project" value="UniProtKB"/>
</dbReference>
<dbReference type="GO" id="GO:1902601">
    <property type="term" value="P:silver ion transmembrane transport"/>
    <property type="evidence" value="ECO:0000250"/>
    <property type="project" value="UniProtKB"/>
</dbReference>
<dbReference type="GO" id="GO:0036324">
    <property type="term" value="P:vascular endothelial growth factor receptor-2 signaling pathway"/>
    <property type="evidence" value="ECO:0000250"/>
    <property type="project" value="UniProtKB"/>
</dbReference>
<dbReference type="GO" id="GO:0042908">
    <property type="term" value="P:xenobiotic transport"/>
    <property type="evidence" value="ECO:0000250"/>
    <property type="project" value="UniProtKB"/>
</dbReference>
<dbReference type="InterPro" id="IPR007274">
    <property type="entry name" value="Cop_transporter"/>
</dbReference>
<dbReference type="PANTHER" id="PTHR12483:SF22">
    <property type="entry name" value="HIGH AFFINITY COPPER UPTAKE PROTEIN 1"/>
    <property type="match status" value="1"/>
</dbReference>
<dbReference type="PANTHER" id="PTHR12483">
    <property type="entry name" value="SOLUTE CARRIER FAMILY 31 COPPER TRANSPORTERS"/>
    <property type="match status" value="1"/>
</dbReference>
<dbReference type="Pfam" id="PF04145">
    <property type="entry name" value="Ctr"/>
    <property type="match status" value="1"/>
</dbReference>
<gene>
    <name evidence="1" type="primary">SLC31A1</name>
    <name evidence="7" type="synonym">CTR1</name>
</gene>
<name>COPT1_PIG</name>
<sequence length="189" mass="20953">MDHSAHMGMSTHMGMSDMNHSTTMPPSHHHPTSSGSHESMMMPMTFYFGFKKVEVLFAGLVINTAGEMAGAFVAVFLLAMFYEGLKIAREGLLRKSQVSIRYNSMPVPGPNGTILMETHKTVGQQMLSFPHLLQTVLHIIQVVISYFLMLIFMTYNGYLCIAVAAGAGTGYFLFSWKKAVVVDITEHCH</sequence>
<reference key="1">
    <citation type="journal article" date="2003" name="Anim. Genet.">
        <title>Cloning, characterization and chromosomal localization of the Sus scrofa SLC31A1 gene.</title>
        <authorList>
            <person name="Harboe T.L."/>
            <person name="Jensen L.R."/>
            <person name="Hansen C."/>
            <person name="Horn P."/>
            <person name="Bendixen C."/>
            <person name="Tommerup N."/>
            <person name="Tumer Z."/>
        </authorList>
    </citation>
    <scope>NUCLEOTIDE SEQUENCE [GENOMIC DNA / MRNA]</scope>
</reference>
<reference key="2">
    <citation type="journal article" date="2010" name="J. Biol. Chem.">
        <title>Ctr1 is an apical copper transporter in mammalian intestinal epithelial cells in vivo that is controlled at the level of protein stability.</title>
        <authorList>
            <person name="Nose Y."/>
            <person name="Wood L.K."/>
            <person name="Kim B.E."/>
            <person name="Prohaska J.R."/>
            <person name="Fry R.S."/>
            <person name="Spears J.W."/>
            <person name="Thiele D.J."/>
        </authorList>
    </citation>
    <scope>SUBCELLULAR LOCATION</scope>
</reference>
<protein>
    <recommendedName>
        <fullName evidence="1">High affinity copper uptake protein 1</fullName>
    </recommendedName>
    <alternativeName>
        <fullName evidence="7">Copper transporter 1</fullName>
        <shortName evidence="7">CTR1</shortName>
    </alternativeName>
    <alternativeName>
        <fullName>Solute carrier family 31 member 1</fullName>
    </alternativeName>
    <component>
        <recommendedName>
            <fullName evidence="1">Truncated CTR1 form</fullName>
        </recommendedName>
    </component>
</protein>
<proteinExistence type="evidence at transcript level"/>
<feature type="chain" id="PRO_0000290190" description="High affinity copper uptake protein 1">
    <location>
        <begin position="1"/>
        <end position="189"/>
    </location>
</feature>
<feature type="chain" id="PRO_0000458010" description="Truncated CTR1 form" evidence="1">
    <location>
        <begin position="42"/>
        <end position="189"/>
    </location>
</feature>
<feature type="topological domain" description="Extracellular" evidence="4">
    <location>
        <begin position="1"/>
        <end position="67"/>
    </location>
</feature>
<feature type="transmembrane region" description="Helical" evidence="4">
    <location>
        <begin position="68"/>
        <end position="88"/>
    </location>
</feature>
<feature type="topological domain" description="Cytoplasmic" evidence="4">
    <location>
        <begin position="89"/>
        <end position="131"/>
    </location>
</feature>
<feature type="transmembrane region" description="Helical" evidence="4">
    <location>
        <begin position="132"/>
        <end position="152"/>
    </location>
</feature>
<feature type="topological domain" description="Extracellular" evidence="4">
    <location>
        <begin position="153"/>
        <end position="155"/>
    </location>
</feature>
<feature type="transmembrane region" description="Helical" evidence="4">
    <location>
        <begin position="156"/>
        <end position="176"/>
    </location>
</feature>
<feature type="topological domain" description="Cytoplasmic" evidence="4">
    <location>
        <begin position="177"/>
        <end position="189"/>
    </location>
</feature>
<feature type="region of interest" description="Disordered" evidence="5">
    <location>
        <begin position="15"/>
        <end position="36"/>
    </location>
</feature>
<feature type="short sequence motif" description="Methionine segments (Mets) motif" evidence="1">
    <location>
        <begin position="13"/>
        <end position="18"/>
    </location>
</feature>
<feature type="compositionally biased region" description="Low complexity" evidence="5">
    <location>
        <begin position="20"/>
        <end position="36"/>
    </location>
</feature>
<feature type="site" description="Cleavage" evidence="1">
    <location>
        <begin position="41"/>
        <end position="42"/>
    </location>
</feature>
<feature type="modified residue" description="Phosphothreonine" evidence="1">
    <location>
        <position position="113"/>
    </location>
</feature>
<feature type="modified residue" description="Cysteine sulfenic acid (-SOH)" evidence="1">
    <location>
        <position position="188"/>
    </location>
</feature>
<feature type="disulfide bond" description="Interchain (with C-1208 in KDR)" evidence="1">
    <location>
        <position position="188"/>
    </location>
</feature>